<dbReference type="EC" id="1.3.3.3" evidence="1"/>
<dbReference type="EMBL" id="BX950851">
    <property type="protein sequence ID" value="CAG73786.1"/>
    <property type="molecule type" value="Genomic_DNA"/>
</dbReference>
<dbReference type="RefSeq" id="WP_011092477.1">
    <property type="nucleotide sequence ID" value="NC_004547.2"/>
</dbReference>
<dbReference type="SMR" id="Q6D8U8"/>
<dbReference type="STRING" id="218491.ECA0874"/>
<dbReference type="KEGG" id="eca:ECA0874"/>
<dbReference type="PATRIC" id="fig|218491.5.peg.876"/>
<dbReference type="eggNOG" id="COG0408">
    <property type="taxonomic scope" value="Bacteria"/>
</dbReference>
<dbReference type="HOGENOM" id="CLU_026169_0_1_6"/>
<dbReference type="OrthoDB" id="9777553at2"/>
<dbReference type="UniPathway" id="UPA00251">
    <property type="reaction ID" value="UER00322"/>
</dbReference>
<dbReference type="Proteomes" id="UP000007966">
    <property type="component" value="Chromosome"/>
</dbReference>
<dbReference type="GO" id="GO:0005737">
    <property type="term" value="C:cytoplasm"/>
    <property type="evidence" value="ECO:0007669"/>
    <property type="project" value="UniProtKB-SubCell"/>
</dbReference>
<dbReference type="GO" id="GO:0004109">
    <property type="term" value="F:coproporphyrinogen oxidase activity"/>
    <property type="evidence" value="ECO:0007669"/>
    <property type="project" value="UniProtKB-UniRule"/>
</dbReference>
<dbReference type="GO" id="GO:0046872">
    <property type="term" value="F:metal ion binding"/>
    <property type="evidence" value="ECO:0007669"/>
    <property type="project" value="UniProtKB-KW"/>
</dbReference>
<dbReference type="GO" id="GO:0042803">
    <property type="term" value="F:protein homodimerization activity"/>
    <property type="evidence" value="ECO:0000250"/>
    <property type="project" value="UniProtKB"/>
</dbReference>
<dbReference type="GO" id="GO:0006782">
    <property type="term" value="P:protoporphyrinogen IX biosynthetic process"/>
    <property type="evidence" value="ECO:0007669"/>
    <property type="project" value="UniProtKB-UniRule"/>
</dbReference>
<dbReference type="FunFam" id="3.40.1500.10:FF:000001">
    <property type="entry name" value="Oxygen-dependent coproporphyrinogen-III oxidase"/>
    <property type="match status" value="1"/>
</dbReference>
<dbReference type="Gene3D" id="3.40.1500.10">
    <property type="entry name" value="Coproporphyrinogen III oxidase, aerobic"/>
    <property type="match status" value="1"/>
</dbReference>
<dbReference type="HAMAP" id="MF_00333">
    <property type="entry name" value="Coprogen_oxidas"/>
    <property type="match status" value="1"/>
</dbReference>
<dbReference type="InterPro" id="IPR001260">
    <property type="entry name" value="Coprogen_oxidase_aer"/>
</dbReference>
<dbReference type="InterPro" id="IPR036406">
    <property type="entry name" value="Coprogen_oxidase_aer_sf"/>
</dbReference>
<dbReference type="InterPro" id="IPR018375">
    <property type="entry name" value="Coprogen_oxidase_CS"/>
</dbReference>
<dbReference type="NCBIfam" id="NF003727">
    <property type="entry name" value="PRK05330.1"/>
    <property type="match status" value="1"/>
</dbReference>
<dbReference type="PANTHER" id="PTHR10755">
    <property type="entry name" value="COPROPORPHYRINOGEN III OXIDASE, MITOCHONDRIAL"/>
    <property type="match status" value="1"/>
</dbReference>
<dbReference type="PANTHER" id="PTHR10755:SF0">
    <property type="entry name" value="OXYGEN-DEPENDENT COPROPORPHYRINOGEN-III OXIDASE, MITOCHONDRIAL"/>
    <property type="match status" value="1"/>
</dbReference>
<dbReference type="Pfam" id="PF01218">
    <property type="entry name" value="Coprogen_oxidas"/>
    <property type="match status" value="1"/>
</dbReference>
<dbReference type="PIRSF" id="PIRSF000166">
    <property type="entry name" value="Coproporphyri_ox"/>
    <property type="match status" value="1"/>
</dbReference>
<dbReference type="PRINTS" id="PR00073">
    <property type="entry name" value="COPRGNOXDASE"/>
</dbReference>
<dbReference type="SUPFAM" id="SSF102886">
    <property type="entry name" value="Coproporphyrinogen III oxidase"/>
    <property type="match status" value="1"/>
</dbReference>
<dbReference type="PROSITE" id="PS01021">
    <property type="entry name" value="COPROGEN_OXIDASE"/>
    <property type="match status" value="1"/>
</dbReference>
<evidence type="ECO:0000255" key="1">
    <source>
        <dbReference type="HAMAP-Rule" id="MF_00333"/>
    </source>
</evidence>
<sequence length="310" mass="35241">MSDINAVKHFLLSLQKDICQQLAAIDGGADFAEDEWQRAEGGGGCSRVLSGGRIFERTGVNFSHVTGKSLPPSASTHRPDLAGRSFQAMGVSLVIHPLSPYIPTSHANVRLFVAEKPGEEPVWWFGGGFDLTPYYGFKEDAVHWHQTAHDLCQPFGDDVYPRYKKWCDDYFFLKHRNEARGIGGLFFDDLNEPDFATSFAFIRAVGNGFLDGYLPIVERRKDLAWGERERDFQLYRRGRYVEFNLIWDRGTLFGLQSGGRTESILMSMPPLARWEYQHQPEPDSPEAALYRDFLPARDWLAESNTHNKEA</sequence>
<protein>
    <recommendedName>
        <fullName evidence="1">Oxygen-dependent coproporphyrinogen-III oxidase</fullName>
        <shortName evidence="1">CPO</shortName>
        <shortName evidence="1">Coprogen oxidase</shortName>
        <shortName evidence="1">Coproporphyrinogenase</shortName>
        <ecNumber evidence="1">1.3.3.3</ecNumber>
    </recommendedName>
</protein>
<name>HEM6_PECAS</name>
<reference key="1">
    <citation type="journal article" date="2004" name="Proc. Natl. Acad. Sci. U.S.A.">
        <title>Genome sequence of the enterobacterial phytopathogen Erwinia carotovora subsp. atroseptica and characterization of virulence factors.</title>
        <authorList>
            <person name="Bell K.S."/>
            <person name="Sebaihia M."/>
            <person name="Pritchard L."/>
            <person name="Holden M.T.G."/>
            <person name="Hyman L.J."/>
            <person name="Holeva M.C."/>
            <person name="Thomson N.R."/>
            <person name="Bentley S.D."/>
            <person name="Churcher L.J.C."/>
            <person name="Mungall K."/>
            <person name="Atkin R."/>
            <person name="Bason N."/>
            <person name="Brooks K."/>
            <person name="Chillingworth T."/>
            <person name="Clark K."/>
            <person name="Doggett J."/>
            <person name="Fraser A."/>
            <person name="Hance Z."/>
            <person name="Hauser H."/>
            <person name="Jagels K."/>
            <person name="Moule S."/>
            <person name="Norbertczak H."/>
            <person name="Ormond D."/>
            <person name="Price C."/>
            <person name="Quail M.A."/>
            <person name="Sanders M."/>
            <person name="Walker D."/>
            <person name="Whitehead S."/>
            <person name="Salmond G.P.C."/>
            <person name="Birch P.R.J."/>
            <person name="Parkhill J."/>
            <person name="Toth I.K."/>
        </authorList>
    </citation>
    <scope>NUCLEOTIDE SEQUENCE [LARGE SCALE GENOMIC DNA]</scope>
    <source>
        <strain>SCRI 1043 / ATCC BAA-672</strain>
    </source>
</reference>
<proteinExistence type="inferred from homology"/>
<gene>
    <name evidence="1" type="primary">hemF</name>
    <name type="ordered locus">ECA0874</name>
</gene>
<keyword id="KW-0963">Cytoplasm</keyword>
<keyword id="KW-0350">Heme biosynthesis</keyword>
<keyword id="KW-0479">Metal-binding</keyword>
<keyword id="KW-0560">Oxidoreductase</keyword>
<keyword id="KW-0627">Porphyrin biosynthesis</keyword>
<keyword id="KW-1185">Reference proteome</keyword>
<comment type="function">
    <text evidence="1">Involved in the heme biosynthesis. Catalyzes the aerobic oxidative decarboxylation of propionate groups of rings A and B of coproporphyrinogen-III to yield the vinyl groups in protoporphyrinogen-IX.</text>
</comment>
<comment type="catalytic activity">
    <reaction evidence="1">
        <text>coproporphyrinogen III + O2 + 2 H(+) = protoporphyrinogen IX + 2 CO2 + 2 H2O</text>
        <dbReference type="Rhea" id="RHEA:18257"/>
        <dbReference type="ChEBI" id="CHEBI:15377"/>
        <dbReference type="ChEBI" id="CHEBI:15378"/>
        <dbReference type="ChEBI" id="CHEBI:15379"/>
        <dbReference type="ChEBI" id="CHEBI:16526"/>
        <dbReference type="ChEBI" id="CHEBI:57307"/>
        <dbReference type="ChEBI" id="CHEBI:57309"/>
        <dbReference type="EC" id="1.3.3.3"/>
    </reaction>
</comment>
<comment type="cofactor">
    <cofactor evidence="1">
        <name>a divalent metal cation</name>
        <dbReference type="ChEBI" id="CHEBI:60240"/>
    </cofactor>
</comment>
<comment type="pathway">
    <text evidence="1">Porphyrin-containing compound metabolism; protoporphyrin-IX biosynthesis; protoporphyrinogen-IX from coproporphyrinogen-III (O2 route): step 1/1.</text>
</comment>
<comment type="subunit">
    <text evidence="1">Homodimer.</text>
</comment>
<comment type="subcellular location">
    <subcellularLocation>
        <location evidence="1">Cytoplasm</location>
    </subcellularLocation>
</comment>
<comment type="similarity">
    <text evidence="1">Belongs to the aerobic coproporphyrinogen-III oxidase family.</text>
</comment>
<organism>
    <name type="scientific">Pectobacterium atrosepticum (strain SCRI 1043 / ATCC BAA-672)</name>
    <name type="common">Erwinia carotovora subsp. atroseptica</name>
    <dbReference type="NCBI Taxonomy" id="218491"/>
    <lineage>
        <taxon>Bacteria</taxon>
        <taxon>Pseudomonadati</taxon>
        <taxon>Pseudomonadota</taxon>
        <taxon>Gammaproteobacteria</taxon>
        <taxon>Enterobacterales</taxon>
        <taxon>Pectobacteriaceae</taxon>
        <taxon>Pectobacterium</taxon>
    </lineage>
</organism>
<accession>Q6D8U8</accession>
<feature type="chain" id="PRO_0000109897" description="Oxygen-dependent coproporphyrinogen-III oxidase">
    <location>
        <begin position="1"/>
        <end position="310"/>
    </location>
</feature>
<feature type="region of interest" description="Important for dimerization" evidence="1">
    <location>
        <begin position="240"/>
        <end position="275"/>
    </location>
</feature>
<feature type="active site" description="Proton donor" evidence="1">
    <location>
        <position position="106"/>
    </location>
</feature>
<feature type="binding site" evidence="1">
    <location>
        <position position="92"/>
    </location>
    <ligand>
        <name>substrate</name>
    </ligand>
</feature>
<feature type="binding site" evidence="1">
    <location>
        <position position="96"/>
    </location>
    <ligand>
        <name>a divalent metal cation</name>
        <dbReference type="ChEBI" id="CHEBI:60240"/>
    </ligand>
</feature>
<feature type="binding site" evidence="1">
    <location>
        <position position="106"/>
    </location>
    <ligand>
        <name>a divalent metal cation</name>
        <dbReference type="ChEBI" id="CHEBI:60240"/>
    </ligand>
</feature>
<feature type="binding site" evidence="1">
    <location>
        <begin position="108"/>
        <end position="110"/>
    </location>
    <ligand>
        <name>substrate</name>
    </ligand>
</feature>
<feature type="binding site" evidence="1">
    <location>
        <position position="145"/>
    </location>
    <ligand>
        <name>a divalent metal cation</name>
        <dbReference type="ChEBI" id="CHEBI:60240"/>
    </ligand>
</feature>
<feature type="binding site" evidence="1">
    <location>
        <position position="175"/>
    </location>
    <ligand>
        <name>a divalent metal cation</name>
        <dbReference type="ChEBI" id="CHEBI:60240"/>
    </ligand>
</feature>
<feature type="binding site" evidence="1">
    <location>
        <begin position="258"/>
        <end position="260"/>
    </location>
    <ligand>
        <name>substrate</name>
    </ligand>
</feature>
<feature type="site" description="Important for dimerization" evidence="1">
    <location>
        <position position="175"/>
    </location>
</feature>